<gene>
    <name evidence="1" type="primary">ileS</name>
    <name type="ordered locus">Lxx07970</name>
</gene>
<protein>
    <recommendedName>
        <fullName evidence="1">Isoleucine--tRNA ligase</fullName>
        <ecNumber evidence="1">6.1.1.5</ecNumber>
    </recommendedName>
    <alternativeName>
        <fullName evidence="1">Isoleucyl-tRNA synthetase</fullName>
        <shortName evidence="1">IleRS</shortName>
    </alternativeName>
</protein>
<organism>
    <name type="scientific">Leifsonia xyli subsp. xyli (strain CTCB07)</name>
    <dbReference type="NCBI Taxonomy" id="281090"/>
    <lineage>
        <taxon>Bacteria</taxon>
        <taxon>Bacillati</taxon>
        <taxon>Actinomycetota</taxon>
        <taxon>Actinomycetes</taxon>
        <taxon>Micrococcales</taxon>
        <taxon>Microbacteriaceae</taxon>
        <taxon>Leifsonia</taxon>
    </lineage>
</organism>
<sequence>MVPRRSRQRPASSCRTAKTARREMPYPLPAPDGQEPEAQPVTPSPVFPEIEEDVLAFWDRDGTFHASIDNRDGAPEWVFYDGPPFANGLPHYGHLMTGYAKDVFPRYQTMRGKKVERRFGWDTHGLPAELEAERQLGITDKSQIEEMGLAAFNQAAKDSVLKYTREWQQYVTRQARWVDFDNGYKTLDTTYMESVIWAFKQLHEKGLAYEGYRVLPYCWRDQTPLSNHELRMDDDVYKMRQDQTVTVTFPLTGAKAESLGLTGVRVLAWTTTPWTLPTNLALVVGPDIQYAVVPAGPNGAADAHGRPDDEVLSGEYLLAIDLVGNYAKDLGYGSPEAARAAVTRTIPGRELEGVTYDRLWDYYADAATWGTQNAWQILVDGYVTTEDGTGIVHQAPAYGEDDQRVCEAAGIPVIISVDDGARFLPAVQDVAGLQVFEAGKPLIKLLREEGRLLRQASYEHSYPHCWRCRNPLIYKAVSSWFVRVTDFRDRMVALNQEITWVPENVKDGQFGKWLAGARDWSISRNRYFGSPIPVWKSDDPDYPRVDVYGSLAELERDFGRLPLNAAGEPDLHRPFVDDLTRPNPDDPTGRSTMRRIPDVLDVWFDSGSMPFAQVHYPFENSDWFDSHNPADFIVEYIGQARGWFYLLHALSTALFDRPAFTNVISHGIVLGNDGQKVSKSLRNYPDVNDVFDRDGSDAMRWFLMSSPVLRGGNLVVTEEGVREGVRQVLLPLWNTWYFFSLYANATGYEAKRSTASAAVLDRYLLAKTRDLVEAVTADLDALDSTLASAKLRDFADLLTNWYVRRSRDRFWAGVDGEGAGAEAFDTLYTVLETLTRVAAPLLPLVTERIWKDLTGGRSVHLTDWPDAAELPADDALVAAMDRVRAISSTALSLRKQAGLRVRLPLASLTVVAEGAAALAPFEAILRDELNVKAVCLVEGEHSGVDRALTVKARQLGPRIGKRVQEVIRAAKSGDWSEADGVVTAGGVELEPGEYELAVVISAPTARFENGVYIELDTALTPELEAEGLARDIIRAVQDTRKAAGLGVSDRIALTLAFENGGDARVLGLATEVDIASETLARTVQVAAAAGAFVKTFGAGQFANVGDFTVGITKIEEADE</sequence>
<keyword id="KW-0030">Aminoacyl-tRNA synthetase</keyword>
<keyword id="KW-0067">ATP-binding</keyword>
<keyword id="KW-0963">Cytoplasm</keyword>
<keyword id="KW-0436">Ligase</keyword>
<keyword id="KW-0479">Metal-binding</keyword>
<keyword id="KW-0547">Nucleotide-binding</keyword>
<keyword id="KW-0648">Protein biosynthesis</keyword>
<keyword id="KW-1185">Reference proteome</keyword>
<keyword id="KW-0862">Zinc</keyword>
<feature type="chain" id="PRO_0000098546" description="Isoleucine--tRNA ligase">
    <location>
        <begin position="1"/>
        <end position="1119"/>
    </location>
</feature>
<feature type="region of interest" description="Disordered" evidence="2">
    <location>
        <begin position="1"/>
        <end position="43"/>
    </location>
</feature>
<feature type="short sequence motif" description="'HIGH' region">
    <location>
        <begin position="84"/>
        <end position="94"/>
    </location>
</feature>
<feature type="short sequence motif" description="'KMSKS' region">
    <location>
        <begin position="676"/>
        <end position="680"/>
    </location>
</feature>
<feature type="binding site" evidence="1">
    <location>
        <position position="679"/>
    </location>
    <ligand>
        <name>ATP</name>
        <dbReference type="ChEBI" id="CHEBI:30616"/>
    </ligand>
</feature>
<comment type="function">
    <text evidence="1">Catalyzes the attachment of isoleucine to tRNA(Ile). As IleRS can inadvertently accommodate and process structurally similar amino acids such as valine, to avoid such errors it has two additional distinct tRNA(Ile)-dependent editing activities. One activity is designated as 'pretransfer' editing and involves the hydrolysis of activated Val-AMP. The other activity is designated 'posttransfer' editing and involves deacylation of mischarged Val-tRNA(Ile).</text>
</comment>
<comment type="catalytic activity">
    <reaction evidence="1">
        <text>tRNA(Ile) + L-isoleucine + ATP = L-isoleucyl-tRNA(Ile) + AMP + diphosphate</text>
        <dbReference type="Rhea" id="RHEA:11060"/>
        <dbReference type="Rhea" id="RHEA-COMP:9666"/>
        <dbReference type="Rhea" id="RHEA-COMP:9695"/>
        <dbReference type="ChEBI" id="CHEBI:30616"/>
        <dbReference type="ChEBI" id="CHEBI:33019"/>
        <dbReference type="ChEBI" id="CHEBI:58045"/>
        <dbReference type="ChEBI" id="CHEBI:78442"/>
        <dbReference type="ChEBI" id="CHEBI:78528"/>
        <dbReference type="ChEBI" id="CHEBI:456215"/>
        <dbReference type="EC" id="6.1.1.5"/>
    </reaction>
</comment>
<comment type="cofactor">
    <cofactor evidence="1">
        <name>Zn(2+)</name>
        <dbReference type="ChEBI" id="CHEBI:29105"/>
    </cofactor>
</comment>
<comment type="subunit">
    <text evidence="1">Monomer.</text>
</comment>
<comment type="subcellular location">
    <subcellularLocation>
        <location evidence="1">Cytoplasm</location>
    </subcellularLocation>
</comment>
<comment type="domain">
    <text evidence="1">IleRS has two distinct active sites: one for aminoacylation and one for editing. The misactivated valine is translocated from the active site to the editing site, which sterically excludes the correctly activated isoleucine. The single editing site contains two valyl binding pockets, one specific for each substrate (Val-AMP or Val-tRNA(Ile)).</text>
</comment>
<comment type="similarity">
    <text evidence="1">Belongs to the class-I aminoacyl-tRNA synthetase family. IleS type 2 subfamily.</text>
</comment>
<reference key="1">
    <citation type="journal article" date="2004" name="Mol. Plant Microbe Interact.">
        <title>The genome sequence of the Gram-positive sugarcane pathogen Leifsonia xyli subsp. xyli.</title>
        <authorList>
            <person name="Monteiro-Vitorello C.B."/>
            <person name="Camargo L.E.A."/>
            <person name="Van Sluys M.A."/>
            <person name="Kitajima J.P."/>
            <person name="Truffi D."/>
            <person name="do Amaral A.M."/>
            <person name="Harakava R."/>
            <person name="de Oliveira J.C.F."/>
            <person name="Wood D."/>
            <person name="de Oliveira M.C."/>
            <person name="Miyaki C.Y."/>
            <person name="Takita M.A."/>
            <person name="da Silva A.C.R."/>
            <person name="Furlan L.R."/>
            <person name="Carraro D.M."/>
            <person name="Camarotte G."/>
            <person name="Almeida N.F. Jr."/>
            <person name="Carrer H."/>
            <person name="Coutinho L.L."/>
            <person name="El-Dorry H.A."/>
            <person name="Ferro M.I.T."/>
            <person name="Gagliardi P.R."/>
            <person name="Giglioti E."/>
            <person name="Goldman M.H.S."/>
            <person name="Goldman G.H."/>
            <person name="Kimura E.T."/>
            <person name="Ferro E.S."/>
            <person name="Kuramae E.E."/>
            <person name="Lemos E.G.M."/>
            <person name="Lemos M.V.F."/>
            <person name="Mauro S.M.Z."/>
            <person name="Machado M.A."/>
            <person name="Marino C.L."/>
            <person name="Menck C.F."/>
            <person name="Nunes L.R."/>
            <person name="Oliveira R.C."/>
            <person name="Pereira G.G."/>
            <person name="Siqueira W."/>
            <person name="de Souza A.A."/>
            <person name="Tsai S.M."/>
            <person name="Zanca A.S."/>
            <person name="Simpson A.J.G."/>
            <person name="Brumbley S.M."/>
            <person name="Setubal J.C."/>
        </authorList>
    </citation>
    <scope>NUCLEOTIDE SEQUENCE [LARGE SCALE GENOMIC DNA]</scope>
    <source>
        <strain>CTCB07</strain>
    </source>
</reference>
<name>SYI_LEIXX</name>
<proteinExistence type="inferred from homology"/>
<evidence type="ECO:0000255" key="1">
    <source>
        <dbReference type="HAMAP-Rule" id="MF_02003"/>
    </source>
</evidence>
<evidence type="ECO:0000256" key="2">
    <source>
        <dbReference type="SAM" id="MobiDB-lite"/>
    </source>
</evidence>
<accession>Q6AFZ0</accession>
<dbReference type="EC" id="6.1.1.5" evidence="1"/>
<dbReference type="EMBL" id="AE016822">
    <property type="protein sequence ID" value="AAT88705.1"/>
    <property type="molecule type" value="Genomic_DNA"/>
</dbReference>
<dbReference type="SMR" id="Q6AFZ0"/>
<dbReference type="STRING" id="281090.Lxx07970"/>
<dbReference type="KEGG" id="lxx:Lxx07970"/>
<dbReference type="eggNOG" id="COG0060">
    <property type="taxonomic scope" value="Bacteria"/>
</dbReference>
<dbReference type="HOGENOM" id="CLU_001493_1_1_11"/>
<dbReference type="Proteomes" id="UP000001306">
    <property type="component" value="Chromosome"/>
</dbReference>
<dbReference type="GO" id="GO:0005737">
    <property type="term" value="C:cytoplasm"/>
    <property type="evidence" value="ECO:0007669"/>
    <property type="project" value="UniProtKB-SubCell"/>
</dbReference>
<dbReference type="GO" id="GO:0002161">
    <property type="term" value="F:aminoacyl-tRNA deacylase activity"/>
    <property type="evidence" value="ECO:0007669"/>
    <property type="project" value="InterPro"/>
</dbReference>
<dbReference type="GO" id="GO:0005524">
    <property type="term" value="F:ATP binding"/>
    <property type="evidence" value="ECO:0007669"/>
    <property type="project" value="UniProtKB-UniRule"/>
</dbReference>
<dbReference type="GO" id="GO:0004822">
    <property type="term" value="F:isoleucine-tRNA ligase activity"/>
    <property type="evidence" value="ECO:0007669"/>
    <property type="project" value="UniProtKB-UniRule"/>
</dbReference>
<dbReference type="GO" id="GO:0000049">
    <property type="term" value="F:tRNA binding"/>
    <property type="evidence" value="ECO:0007669"/>
    <property type="project" value="InterPro"/>
</dbReference>
<dbReference type="GO" id="GO:0008270">
    <property type="term" value="F:zinc ion binding"/>
    <property type="evidence" value="ECO:0007669"/>
    <property type="project" value="UniProtKB-UniRule"/>
</dbReference>
<dbReference type="GO" id="GO:0006428">
    <property type="term" value="P:isoleucyl-tRNA aminoacylation"/>
    <property type="evidence" value="ECO:0007669"/>
    <property type="project" value="UniProtKB-UniRule"/>
</dbReference>
<dbReference type="CDD" id="cd07961">
    <property type="entry name" value="Anticodon_Ia_Ile_ABEc"/>
    <property type="match status" value="1"/>
</dbReference>
<dbReference type="CDD" id="cd00818">
    <property type="entry name" value="IleRS_core"/>
    <property type="match status" value="1"/>
</dbReference>
<dbReference type="FunFam" id="3.40.50.620:FF:000063">
    <property type="entry name" value="Isoleucine--tRNA ligase"/>
    <property type="match status" value="1"/>
</dbReference>
<dbReference type="FunFam" id="3.40.50.620:FF:000075">
    <property type="entry name" value="Isoleucine--tRNA ligase"/>
    <property type="match status" value="1"/>
</dbReference>
<dbReference type="Gene3D" id="3.40.50.620">
    <property type="entry name" value="HUPs"/>
    <property type="match status" value="2"/>
</dbReference>
<dbReference type="Gene3D" id="1.10.730.10">
    <property type="entry name" value="Isoleucyl-tRNA Synthetase, Domain 1"/>
    <property type="match status" value="1"/>
</dbReference>
<dbReference type="Gene3D" id="3.90.740.10">
    <property type="entry name" value="Valyl/Leucyl/Isoleucyl-tRNA synthetase, editing domain"/>
    <property type="match status" value="1"/>
</dbReference>
<dbReference type="HAMAP" id="MF_02003">
    <property type="entry name" value="Ile_tRNA_synth_type2"/>
    <property type="match status" value="1"/>
</dbReference>
<dbReference type="InterPro" id="IPR001412">
    <property type="entry name" value="aa-tRNA-synth_I_CS"/>
</dbReference>
<dbReference type="InterPro" id="IPR002300">
    <property type="entry name" value="aa-tRNA-synth_Ia"/>
</dbReference>
<dbReference type="InterPro" id="IPR033709">
    <property type="entry name" value="Anticodon_Ile_ABEc"/>
</dbReference>
<dbReference type="InterPro" id="IPR002301">
    <property type="entry name" value="Ile-tRNA-ligase"/>
</dbReference>
<dbReference type="InterPro" id="IPR023586">
    <property type="entry name" value="Ile-tRNA-ligase_type2"/>
</dbReference>
<dbReference type="InterPro" id="IPR013155">
    <property type="entry name" value="M/V/L/I-tRNA-synth_anticd-bd"/>
</dbReference>
<dbReference type="InterPro" id="IPR014729">
    <property type="entry name" value="Rossmann-like_a/b/a_fold"/>
</dbReference>
<dbReference type="InterPro" id="IPR009080">
    <property type="entry name" value="tRNAsynth_Ia_anticodon-bd"/>
</dbReference>
<dbReference type="InterPro" id="IPR009008">
    <property type="entry name" value="Val/Leu/Ile-tRNA-synth_edit"/>
</dbReference>
<dbReference type="NCBIfam" id="TIGR00392">
    <property type="entry name" value="ileS"/>
    <property type="match status" value="1"/>
</dbReference>
<dbReference type="PANTHER" id="PTHR42780:SF1">
    <property type="entry name" value="ISOLEUCINE--TRNA LIGASE, CYTOPLASMIC"/>
    <property type="match status" value="1"/>
</dbReference>
<dbReference type="PANTHER" id="PTHR42780">
    <property type="entry name" value="SOLEUCYL-TRNA SYNTHETASE"/>
    <property type="match status" value="1"/>
</dbReference>
<dbReference type="Pfam" id="PF08264">
    <property type="entry name" value="Anticodon_1"/>
    <property type="match status" value="1"/>
</dbReference>
<dbReference type="Pfam" id="PF19302">
    <property type="entry name" value="DUF5915"/>
    <property type="match status" value="1"/>
</dbReference>
<dbReference type="Pfam" id="PF00133">
    <property type="entry name" value="tRNA-synt_1"/>
    <property type="match status" value="1"/>
</dbReference>
<dbReference type="PRINTS" id="PR00984">
    <property type="entry name" value="TRNASYNTHILE"/>
</dbReference>
<dbReference type="SUPFAM" id="SSF47323">
    <property type="entry name" value="Anticodon-binding domain of a subclass of class I aminoacyl-tRNA synthetases"/>
    <property type="match status" value="1"/>
</dbReference>
<dbReference type="SUPFAM" id="SSF52374">
    <property type="entry name" value="Nucleotidylyl transferase"/>
    <property type="match status" value="1"/>
</dbReference>
<dbReference type="SUPFAM" id="SSF50677">
    <property type="entry name" value="ValRS/IleRS/LeuRS editing domain"/>
    <property type="match status" value="1"/>
</dbReference>
<dbReference type="PROSITE" id="PS00178">
    <property type="entry name" value="AA_TRNA_LIGASE_I"/>
    <property type="match status" value="1"/>
</dbReference>